<sequence length="460" mass="52663">MSDSPEMQPASPSDVVSTHEFQRDLPEEPENAPTPGGDEDHNEEAPEEGAASATPAAESVAETHEDDPADKEDAGVDSDEESILSEVDEAQFEDFDPENVDIEDRPQLAIDEDNLKLIGRHKRKRTEEDGQQVKRKREGRREKKNRRRDMEEGLDEGEDKSRRRDRKKRDATPEDEELLDPATRRRRALDRAMDEALKKPTKRRFRKADGIDLEQMADAEIEDMRKRMTHAAQMDANNRREGRPAMHKLKMLPEVVSLLNRNQYVNSLVDPEINLLEAVKFFLEPLDDGSLPAYNIQRDLMTALSKLPINKETLIASGIGKVIVFYTKSKRPEPGIKRMAERLLAEWTRPILQRSDDYSKRVYQEAEYDPSPHAHKYYRKLTTRTTSAQASVAEARSRELLPPRLANRARPEITHTSYTIVPRPTVVQESKFARPLGASGEDRFRRMRARQIAASKGSRR</sequence>
<name>IWS1_ASPFU</name>
<dbReference type="EMBL" id="AL683874">
    <property type="protein sequence ID" value="CAD27305.1"/>
    <property type="status" value="ALT_SEQ"/>
    <property type="molecule type" value="Genomic_DNA"/>
</dbReference>
<dbReference type="EMBL" id="BX649605">
    <property type="protein sequence ID" value="CAE47953.1"/>
    <property type="status" value="ALT_SEQ"/>
    <property type="molecule type" value="Genomic_DNA"/>
</dbReference>
<dbReference type="EMBL" id="AAHF01000004">
    <property type="protein sequence ID" value="EAL90556.2"/>
    <property type="status" value="ALT_SEQ"/>
    <property type="molecule type" value="Genomic_DNA"/>
</dbReference>
<dbReference type="RefSeq" id="XP_752594.2">
    <property type="nucleotide sequence ID" value="XM_747501.2"/>
</dbReference>
<dbReference type="SMR" id="Q4WSM6"/>
<dbReference type="FunCoup" id="Q4WSM6">
    <property type="interactions" value="347"/>
</dbReference>
<dbReference type="STRING" id="330879.Q4WSM6"/>
<dbReference type="GeneID" id="3510557"/>
<dbReference type="KEGG" id="afm:AFUA_1G12260"/>
<dbReference type="eggNOG" id="KOG1793">
    <property type="taxonomic scope" value="Eukaryota"/>
</dbReference>
<dbReference type="HOGENOM" id="CLU_045275_1_0_1"/>
<dbReference type="InParanoid" id="Q4WSM6"/>
<dbReference type="OrthoDB" id="21124at2759"/>
<dbReference type="Proteomes" id="UP000002530">
    <property type="component" value="Chromosome 1"/>
</dbReference>
<dbReference type="GO" id="GO:0005634">
    <property type="term" value="C:nucleus"/>
    <property type="evidence" value="ECO:0000318"/>
    <property type="project" value="GO_Central"/>
</dbReference>
<dbReference type="GO" id="GO:0016973">
    <property type="term" value="P:poly(A)+ mRNA export from nucleus"/>
    <property type="evidence" value="ECO:0000318"/>
    <property type="project" value="GO_Central"/>
</dbReference>
<dbReference type="FunFam" id="1.20.930.10:FF:000003">
    <property type="entry name" value="Putative Transcription factor IWS1"/>
    <property type="match status" value="1"/>
</dbReference>
<dbReference type="Gene3D" id="1.20.930.10">
    <property type="entry name" value="Conserved domain common to transcription factors TFIIS, elongin A, CRSP70"/>
    <property type="match status" value="1"/>
</dbReference>
<dbReference type="InterPro" id="IPR051037">
    <property type="entry name" value="RNAPII_TF_IWS1"/>
</dbReference>
<dbReference type="InterPro" id="IPR035441">
    <property type="entry name" value="TFIIS/LEDGF_dom_sf"/>
</dbReference>
<dbReference type="InterPro" id="IPR017923">
    <property type="entry name" value="TFIIS_N"/>
</dbReference>
<dbReference type="PANTHER" id="PTHR46010">
    <property type="entry name" value="PROTEIN IWS1 HOMOLOG"/>
    <property type="match status" value="1"/>
</dbReference>
<dbReference type="PANTHER" id="PTHR46010:SF1">
    <property type="entry name" value="PROTEIN IWS1 HOMOLOG"/>
    <property type="match status" value="1"/>
</dbReference>
<dbReference type="Pfam" id="PF08711">
    <property type="entry name" value="Med26"/>
    <property type="match status" value="1"/>
</dbReference>
<dbReference type="SUPFAM" id="SSF47676">
    <property type="entry name" value="Conserved domain common to transcription factors TFIIS, elongin A, CRSP70"/>
    <property type="match status" value="1"/>
</dbReference>
<dbReference type="PROSITE" id="PS51319">
    <property type="entry name" value="TFIIS_N"/>
    <property type="match status" value="1"/>
</dbReference>
<evidence type="ECO:0000250" key="1"/>
<evidence type="ECO:0000255" key="2">
    <source>
        <dbReference type="PROSITE-ProRule" id="PRU00649"/>
    </source>
</evidence>
<evidence type="ECO:0000256" key="3">
    <source>
        <dbReference type="SAM" id="MobiDB-lite"/>
    </source>
</evidence>
<evidence type="ECO:0000305" key="4"/>
<organism>
    <name type="scientific">Aspergillus fumigatus (strain ATCC MYA-4609 / CBS 101355 / FGSC A1100 / Af293)</name>
    <name type="common">Neosartorya fumigata</name>
    <dbReference type="NCBI Taxonomy" id="330879"/>
    <lineage>
        <taxon>Eukaryota</taxon>
        <taxon>Fungi</taxon>
        <taxon>Dikarya</taxon>
        <taxon>Ascomycota</taxon>
        <taxon>Pezizomycotina</taxon>
        <taxon>Eurotiomycetes</taxon>
        <taxon>Eurotiomycetidae</taxon>
        <taxon>Eurotiales</taxon>
        <taxon>Aspergillaceae</taxon>
        <taxon>Aspergillus</taxon>
        <taxon>Aspergillus subgen. Fumigati</taxon>
    </lineage>
</organism>
<feature type="chain" id="PRO_0000083354" description="Transcription factor iws1">
    <location>
        <begin position="1"/>
        <end position="460"/>
    </location>
</feature>
<feature type="domain" description="TFIIS N-terminal" evidence="2">
    <location>
        <begin position="277"/>
        <end position="354"/>
    </location>
</feature>
<feature type="region of interest" description="Disordered" evidence="3">
    <location>
        <begin position="1"/>
        <end position="186"/>
    </location>
</feature>
<feature type="compositionally biased region" description="Polar residues" evidence="3">
    <location>
        <begin position="1"/>
        <end position="16"/>
    </location>
</feature>
<feature type="compositionally biased region" description="Low complexity" evidence="3">
    <location>
        <begin position="48"/>
        <end position="60"/>
    </location>
</feature>
<feature type="compositionally biased region" description="Acidic residues" evidence="3">
    <location>
        <begin position="64"/>
        <end position="101"/>
    </location>
</feature>
<feature type="compositionally biased region" description="Basic residues" evidence="3">
    <location>
        <begin position="133"/>
        <end position="147"/>
    </location>
</feature>
<reference key="1">
    <citation type="journal article" date="2004" name="Fungal Genet. Biol.">
        <title>Insight into the genome of Aspergillus fumigatus: analysis of a 922 kb region encompassing the nitrate assimilation gene cluster.</title>
        <authorList>
            <person name="Pain A."/>
            <person name="Woodward J.R."/>
            <person name="Quail M.A."/>
            <person name="Anderson M.J."/>
            <person name="Clark R."/>
            <person name="Collins M."/>
            <person name="Fosker N."/>
            <person name="Fraser A."/>
            <person name="Harris D.E."/>
            <person name="Larke N."/>
            <person name="Murphy L.D."/>
            <person name="Humphray S."/>
            <person name="O'Neil S."/>
            <person name="Pertea M."/>
            <person name="Price C."/>
            <person name="Rabbinowitsch E."/>
            <person name="Rajandream M.A."/>
            <person name="Salzberg S.L."/>
            <person name="Saunders D."/>
            <person name="Seeger K."/>
            <person name="Sharp S."/>
            <person name="Warren T."/>
            <person name="Denning D.W."/>
            <person name="Barrell B.G."/>
            <person name="Hall N."/>
        </authorList>
    </citation>
    <scope>NUCLEOTIDE SEQUENCE [LARGE SCALE GENOMIC DNA]</scope>
    <source>
        <strain>ATCC MYA-4609 / CBS 101355 / FGSC A1100 / Af293</strain>
    </source>
</reference>
<reference key="2">
    <citation type="journal article" date="2005" name="Nature">
        <title>Genomic sequence of the pathogenic and allergenic filamentous fungus Aspergillus fumigatus.</title>
        <authorList>
            <person name="Nierman W.C."/>
            <person name="Pain A."/>
            <person name="Anderson M.J."/>
            <person name="Wortman J.R."/>
            <person name="Kim H.S."/>
            <person name="Arroyo J."/>
            <person name="Berriman M."/>
            <person name="Abe K."/>
            <person name="Archer D.B."/>
            <person name="Bermejo C."/>
            <person name="Bennett J.W."/>
            <person name="Bowyer P."/>
            <person name="Chen D."/>
            <person name="Collins M."/>
            <person name="Coulsen R."/>
            <person name="Davies R."/>
            <person name="Dyer P.S."/>
            <person name="Farman M.L."/>
            <person name="Fedorova N."/>
            <person name="Fedorova N.D."/>
            <person name="Feldblyum T.V."/>
            <person name="Fischer R."/>
            <person name="Fosker N."/>
            <person name="Fraser A."/>
            <person name="Garcia J.L."/>
            <person name="Garcia M.J."/>
            <person name="Goble A."/>
            <person name="Goldman G.H."/>
            <person name="Gomi K."/>
            <person name="Griffith-Jones S."/>
            <person name="Gwilliam R."/>
            <person name="Haas B.J."/>
            <person name="Haas H."/>
            <person name="Harris D.E."/>
            <person name="Horiuchi H."/>
            <person name="Huang J."/>
            <person name="Humphray S."/>
            <person name="Jimenez J."/>
            <person name="Keller N."/>
            <person name="Khouri H."/>
            <person name="Kitamoto K."/>
            <person name="Kobayashi T."/>
            <person name="Konzack S."/>
            <person name="Kulkarni R."/>
            <person name="Kumagai T."/>
            <person name="Lafton A."/>
            <person name="Latge J.-P."/>
            <person name="Li W."/>
            <person name="Lord A."/>
            <person name="Lu C."/>
            <person name="Majoros W.H."/>
            <person name="May G.S."/>
            <person name="Miller B.L."/>
            <person name="Mohamoud Y."/>
            <person name="Molina M."/>
            <person name="Monod M."/>
            <person name="Mouyna I."/>
            <person name="Mulligan S."/>
            <person name="Murphy L.D."/>
            <person name="O'Neil S."/>
            <person name="Paulsen I."/>
            <person name="Penalva M.A."/>
            <person name="Pertea M."/>
            <person name="Price C."/>
            <person name="Pritchard B.L."/>
            <person name="Quail M.A."/>
            <person name="Rabbinowitsch E."/>
            <person name="Rawlins N."/>
            <person name="Rajandream M.A."/>
            <person name="Reichard U."/>
            <person name="Renauld H."/>
            <person name="Robson G.D."/>
            <person name="Rodriguez de Cordoba S."/>
            <person name="Rodriguez-Pena J.M."/>
            <person name="Ronning C.M."/>
            <person name="Rutter S."/>
            <person name="Salzberg S.L."/>
            <person name="Sanchez M."/>
            <person name="Sanchez-Ferrero J.C."/>
            <person name="Saunders D."/>
            <person name="Seeger K."/>
            <person name="Squares R."/>
            <person name="Squares S."/>
            <person name="Takeuchi M."/>
            <person name="Tekaia F."/>
            <person name="Turner G."/>
            <person name="Vazquez de Aldana C.R."/>
            <person name="Weidman J."/>
            <person name="White O."/>
            <person name="Woodward J.R."/>
            <person name="Yu J.-H."/>
            <person name="Fraser C.M."/>
            <person name="Galagan J.E."/>
            <person name="Asai K."/>
            <person name="Machida M."/>
            <person name="Hall N."/>
            <person name="Barrell B.G."/>
            <person name="Denning D.W."/>
        </authorList>
    </citation>
    <scope>NUCLEOTIDE SEQUENCE [LARGE SCALE GENOMIC DNA]</scope>
    <source>
        <strain>ATCC MYA-4609 / CBS 101355 / FGSC A1100 / Af293</strain>
    </source>
</reference>
<comment type="function">
    <text evidence="1">Transcription factor involved in RNA polymerase II transcription regulation. May function in both SPT15/TBP post-recruitment and recruitment steps of transcription (By similarity).</text>
</comment>
<comment type="subcellular location">
    <subcellularLocation>
        <location evidence="2">Nucleus</location>
    </subcellularLocation>
</comment>
<comment type="similarity">
    <text evidence="4">Belongs to the IWS1 family.</text>
</comment>
<comment type="sequence caution" evidence="4">
    <conflict type="erroneous gene model prediction">
        <sequence resource="EMBL-CDS" id="CAD27305"/>
    </conflict>
</comment>
<comment type="sequence caution" evidence="4">
    <conflict type="erroneous gene model prediction">
        <sequence resource="EMBL-CDS" id="CAE47953"/>
    </conflict>
</comment>
<comment type="sequence caution" evidence="4">
    <conflict type="erroneous gene model prediction">
        <sequence resource="EMBL-CDS" id="EAL90556"/>
    </conflict>
</comment>
<gene>
    <name type="primary">iws1</name>
    <name type="ORF">AfA14E5.15c</name>
    <name type="ORF">AFUA_1G12260</name>
</gene>
<keyword id="KW-0539">Nucleus</keyword>
<keyword id="KW-1185">Reference proteome</keyword>
<keyword id="KW-0804">Transcription</keyword>
<keyword id="KW-0805">Transcription regulation</keyword>
<proteinExistence type="inferred from homology"/>
<accession>Q4WSM6</accession>
<accession>Q8TGF8</accession>
<protein>
    <recommendedName>
        <fullName>Transcription factor iws1</fullName>
    </recommendedName>
</protein>